<organism>
    <name type="scientific">Zymomonas mobilis subsp. mobilis (strain ATCC 31821 / ZM4 / CP4)</name>
    <dbReference type="NCBI Taxonomy" id="264203"/>
    <lineage>
        <taxon>Bacteria</taxon>
        <taxon>Pseudomonadati</taxon>
        <taxon>Pseudomonadota</taxon>
        <taxon>Alphaproteobacteria</taxon>
        <taxon>Sphingomonadales</taxon>
        <taxon>Zymomonadaceae</taxon>
        <taxon>Zymomonas</taxon>
    </lineage>
</organism>
<gene>
    <name evidence="1" type="primary">argG</name>
    <name type="ordered locus">ZMO1036</name>
</gene>
<sequence length="408" mass="45703">MTEKVKRVVLAYSGGLDTSVILKWLQEHYGCEVVTFTADLGQGEELEPARKKAEMMGIKPEHIFMDDLREEFVRDFVFPMMRANALYEGQYLLGTSIARPLIAKRQIEIARQVGADAVAHGATGKGNDQIRFELGYYALAPDIKVIAPWREWDLNSRSKLIAYAESRQIAVPKDKRGESPFSVDSNLLHTSSEGKILEDPWQEVPDYVYSRTVNPEDAPNTPEIITIDFERGDAIAINGEALSPAELLTKLNELGRKHGIGRLDLVENRYIGMKSRGMYETPGGTILIQAHRGIEQLTLDGGAMHLKDELMPRYAELIYNGFWYSPEREMLQAAIDHSQARVSGTVRLKLYKGSVNVIGRKSPNSLYSEKVVTFEDDAGAYNQQDAAGFIKLNALRLRLLGERNAKGL</sequence>
<dbReference type="EC" id="6.3.4.5" evidence="1"/>
<dbReference type="EMBL" id="AE008692">
    <property type="protein sequence ID" value="AAV89660.1"/>
    <property type="molecule type" value="Genomic_DNA"/>
</dbReference>
<dbReference type="RefSeq" id="WP_011240880.1">
    <property type="nucleotide sequence ID" value="NZ_CP035711.1"/>
</dbReference>
<dbReference type="SMR" id="Q5NNQ0"/>
<dbReference type="STRING" id="264203.ZMO1036"/>
<dbReference type="KEGG" id="zmo:ZMO1036"/>
<dbReference type="eggNOG" id="COG0137">
    <property type="taxonomic scope" value="Bacteria"/>
</dbReference>
<dbReference type="HOGENOM" id="CLU_032784_4_2_5"/>
<dbReference type="UniPathway" id="UPA00068">
    <property type="reaction ID" value="UER00113"/>
</dbReference>
<dbReference type="Proteomes" id="UP000001173">
    <property type="component" value="Chromosome"/>
</dbReference>
<dbReference type="GO" id="GO:0005737">
    <property type="term" value="C:cytoplasm"/>
    <property type="evidence" value="ECO:0007669"/>
    <property type="project" value="UniProtKB-SubCell"/>
</dbReference>
<dbReference type="GO" id="GO:0004055">
    <property type="term" value="F:argininosuccinate synthase activity"/>
    <property type="evidence" value="ECO:0007669"/>
    <property type="project" value="UniProtKB-UniRule"/>
</dbReference>
<dbReference type="GO" id="GO:0005524">
    <property type="term" value="F:ATP binding"/>
    <property type="evidence" value="ECO:0007669"/>
    <property type="project" value="UniProtKB-UniRule"/>
</dbReference>
<dbReference type="GO" id="GO:0000053">
    <property type="term" value="P:argininosuccinate metabolic process"/>
    <property type="evidence" value="ECO:0007669"/>
    <property type="project" value="TreeGrafter"/>
</dbReference>
<dbReference type="GO" id="GO:0006526">
    <property type="term" value="P:L-arginine biosynthetic process"/>
    <property type="evidence" value="ECO:0007669"/>
    <property type="project" value="UniProtKB-UniRule"/>
</dbReference>
<dbReference type="GO" id="GO:0000050">
    <property type="term" value="P:urea cycle"/>
    <property type="evidence" value="ECO:0007669"/>
    <property type="project" value="TreeGrafter"/>
</dbReference>
<dbReference type="CDD" id="cd01999">
    <property type="entry name" value="ASS"/>
    <property type="match status" value="1"/>
</dbReference>
<dbReference type="FunFam" id="3.40.50.620:FF:000019">
    <property type="entry name" value="Argininosuccinate synthase"/>
    <property type="match status" value="1"/>
</dbReference>
<dbReference type="FunFam" id="3.90.1260.10:FF:000007">
    <property type="entry name" value="Argininosuccinate synthase"/>
    <property type="match status" value="1"/>
</dbReference>
<dbReference type="Gene3D" id="3.90.1260.10">
    <property type="entry name" value="Argininosuccinate synthetase, chain A, domain 2"/>
    <property type="match status" value="1"/>
</dbReference>
<dbReference type="Gene3D" id="3.40.50.620">
    <property type="entry name" value="HUPs"/>
    <property type="match status" value="1"/>
</dbReference>
<dbReference type="Gene3D" id="1.20.5.470">
    <property type="entry name" value="Single helix bin"/>
    <property type="match status" value="1"/>
</dbReference>
<dbReference type="HAMAP" id="MF_00005">
    <property type="entry name" value="Arg_succ_synth_type1"/>
    <property type="match status" value="1"/>
</dbReference>
<dbReference type="InterPro" id="IPR048268">
    <property type="entry name" value="Arginosuc_syn_C"/>
</dbReference>
<dbReference type="InterPro" id="IPR048267">
    <property type="entry name" value="Arginosuc_syn_N"/>
</dbReference>
<dbReference type="InterPro" id="IPR001518">
    <property type="entry name" value="Arginosuc_synth"/>
</dbReference>
<dbReference type="InterPro" id="IPR018223">
    <property type="entry name" value="Arginosuc_synth_CS"/>
</dbReference>
<dbReference type="InterPro" id="IPR023434">
    <property type="entry name" value="Arginosuc_synth_type_1_subfam"/>
</dbReference>
<dbReference type="InterPro" id="IPR024074">
    <property type="entry name" value="AS_cat/multimer_dom_body"/>
</dbReference>
<dbReference type="InterPro" id="IPR014729">
    <property type="entry name" value="Rossmann-like_a/b/a_fold"/>
</dbReference>
<dbReference type="NCBIfam" id="TIGR00032">
    <property type="entry name" value="argG"/>
    <property type="match status" value="1"/>
</dbReference>
<dbReference type="NCBIfam" id="NF001770">
    <property type="entry name" value="PRK00509.1"/>
    <property type="match status" value="1"/>
</dbReference>
<dbReference type="PANTHER" id="PTHR11587">
    <property type="entry name" value="ARGININOSUCCINATE SYNTHASE"/>
    <property type="match status" value="1"/>
</dbReference>
<dbReference type="PANTHER" id="PTHR11587:SF2">
    <property type="entry name" value="ARGININOSUCCINATE SYNTHASE"/>
    <property type="match status" value="1"/>
</dbReference>
<dbReference type="Pfam" id="PF20979">
    <property type="entry name" value="Arginosuc_syn_C"/>
    <property type="match status" value="1"/>
</dbReference>
<dbReference type="Pfam" id="PF00764">
    <property type="entry name" value="Arginosuc_synth"/>
    <property type="match status" value="1"/>
</dbReference>
<dbReference type="SUPFAM" id="SSF52402">
    <property type="entry name" value="Adenine nucleotide alpha hydrolases-like"/>
    <property type="match status" value="1"/>
</dbReference>
<dbReference type="SUPFAM" id="SSF69864">
    <property type="entry name" value="Argininosuccinate synthetase, C-terminal domain"/>
    <property type="match status" value="1"/>
</dbReference>
<dbReference type="PROSITE" id="PS00564">
    <property type="entry name" value="ARGININOSUCCIN_SYN_1"/>
    <property type="match status" value="1"/>
</dbReference>
<dbReference type="PROSITE" id="PS00565">
    <property type="entry name" value="ARGININOSUCCIN_SYN_2"/>
    <property type="match status" value="1"/>
</dbReference>
<name>ASSY_ZYMMO</name>
<comment type="catalytic activity">
    <reaction evidence="1">
        <text>L-citrulline + L-aspartate + ATP = 2-(N(omega)-L-arginino)succinate + AMP + diphosphate + H(+)</text>
        <dbReference type="Rhea" id="RHEA:10932"/>
        <dbReference type="ChEBI" id="CHEBI:15378"/>
        <dbReference type="ChEBI" id="CHEBI:29991"/>
        <dbReference type="ChEBI" id="CHEBI:30616"/>
        <dbReference type="ChEBI" id="CHEBI:33019"/>
        <dbReference type="ChEBI" id="CHEBI:57472"/>
        <dbReference type="ChEBI" id="CHEBI:57743"/>
        <dbReference type="ChEBI" id="CHEBI:456215"/>
        <dbReference type="EC" id="6.3.4.5"/>
    </reaction>
</comment>
<comment type="pathway">
    <text evidence="1">Amino-acid biosynthesis; L-arginine biosynthesis; L-arginine from L-ornithine and carbamoyl phosphate: step 2/3.</text>
</comment>
<comment type="subunit">
    <text evidence="1">Homotetramer.</text>
</comment>
<comment type="subcellular location">
    <subcellularLocation>
        <location evidence="1">Cytoplasm</location>
    </subcellularLocation>
</comment>
<comment type="similarity">
    <text evidence="1">Belongs to the argininosuccinate synthase family. Type 1 subfamily.</text>
</comment>
<proteinExistence type="inferred from homology"/>
<evidence type="ECO:0000255" key="1">
    <source>
        <dbReference type="HAMAP-Rule" id="MF_00005"/>
    </source>
</evidence>
<accession>Q5NNQ0</accession>
<feature type="chain" id="PRO_0000148670" description="Argininosuccinate synthase">
    <location>
        <begin position="1"/>
        <end position="408"/>
    </location>
</feature>
<feature type="binding site" evidence="1">
    <location>
        <begin position="11"/>
        <end position="19"/>
    </location>
    <ligand>
        <name>ATP</name>
        <dbReference type="ChEBI" id="CHEBI:30616"/>
    </ligand>
</feature>
<feature type="binding site" evidence="1">
    <location>
        <position position="38"/>
    </location>
    <ligand>
        <name>ATP</name>
        <dbReference type="ChEBI" id="CHEBI:30616"/>
    </ligand>
</feature>
<feature type="binding site" evidence="1">
    <location>
        <position position="91"/>
    </location>
    <ligand>
        <name>L-citrulline</name>
        <dbReference type="ChEBI" id="CHEBI:57743"/>
    </ligand>
</feature>
<feature type="binding site" evidence="1">
    <location>
        <position position="96"/>
    </location>
    <ligand>
        <name>L-citrulline</name>
        <dbReference type="ChEBI" id="CHEBI:57743"/>
    </ligand>
</feature>
<feature type="binding site" evidence="1">
    <location>
        <position position="121"/>
    </location>
    <ligand>
        <name>ATP</name>
        <dbReference type="ChEBI" id="CHEBI:30616"/>
    </ligand>
</feature>
<feature type="binding site" evidence="1">
    <location>
        <position position="123"/>
    </location>
    <ligand>
        <name>L-aspartate</name>
        <dbReference type="ChEBI" id="CHEBI:29991"/>
    </ligand>
</feature>
<feature type="binding site" evidence="1">
    <location>
        <position position="127"/>
    </location>
    <ligand>
        <name>L-aspartate</name>
        <dbReference type="ChEBI" id="CHEBI:29991"/>
    </ligand>
</feature>
<feature type="binding site" evidence="1">
    <location>
        <position position="127"/>
    </location>
    <ligand>
        <name>L-citrulline</name>
        <dbReference type="ChEBI" id="CHEBI:57743"/>
    </ligand>
</feature>
<feature type="binding site" evidence="1">
    <location>
        <position position="128"/>
    </location>
    <ligand>
        <name>L-aspartate</name>
        <dbReference type="ChEBI" id="CHEBI:29991"/>
    </ligand>
</feature>
<feature type="binding site" evidence="1">
    <location>
        <position position="131"/>
    </location>
    <ligand>
        <name>L-citrulline</name>
        <dbReference type="ChEBI" id="CHEBI:57743"/>
    </ligand>
</feature>
<feature type="binding site" evidence="1">
    <location>
        <position position="182"/>
    </location>
    <ligand>
        <name>L-citrulline</name>
        <dbReference type="ChEBI" id="CHEBI:57743"/>
    </ligand>
</feature>
<feature type="binding site" evidence="1">
    <location>
        <position position="191"/>
    </location>
    <ligand>
        <name>L-citrulline</name>
        <dbReference type="ChEBI" id="CHEBI:57743"/>
    </ligand>
</feature>
<feature type="binding site" evidence="1">
    <location>
        <position position="267"/>
    </location>
    <ligand>
        <name>L-citrulline</name>
        <dbReference type="ChEBI" id="CHEBI:57743"/>
    </ligand>
</feature>
<feature type="binding site" evidence="1">
    <location>
        <position position="279"/>
    </location>
    <ligand>
        <name>L-citrulline</name>
        <dbReference type="ChEBI" id="CHEBI:57743"/>
    </ligand>
</feature>
<reference key="1">
    <citation type="journal article" date="2005" name="Nat. Biotechnol.">
        <title>The genome sequence of the ethanologenic bacterium Zymomonas mobilis ZM4.</title>
        <authorList>
            <person name="Seo J.-S."/>
            <person name="Chong H."/>
            <person name="Park H.S."/>
            <person name="Yoon K.-O."/>
            <person name="Jung C."/>
            <person name="Kim J.J."/>
            <person name="Hong J.H."/>
            <person name="Kim H."/>
            <person name="Kim J.-H."/>
            <person name="Kil J.-I."/>
            <person name="Park C.J."/>
            <person name="Oh H.-M."/>
            <person name="Lee J.-S."/>
            <person name="Jin S.-J."/>
            <person name="Um H.-W."/>
            <person name="Lee H.-J."/>
            <person name="Oh S.-J."/>
            <person name="Kim J.Y."/>
            <person name="Kang H.L."/>
            <person name="Lee S.Y."/>
            <person name="Lee K.J."/>
            <person name="Kang H.S."/>
        </authorList>
    </citation>
    <scope>NUCLEOTIDE SEQUENCE [LARGE SCALE GENOMIC DNA]</scope>
    <source>
        <strain>ATCC 31821 / ZM4 / CP4</strain>
    </source>
</reference>
<protein>
    <recommendedName>
        <fullName evidence="1">Argininosuccinate synthase</fullName>
        <ecNumber evidence="1">6.3.4.5</ecNumber>
    </recommendedName>
    <alternativeName>
        <fullName evidence="1">Citrulline--aspartate ligase</fullName>
    </alternativeName>
</protein>
<keyword id="KW-0028">Amino-acid biosynthesis</keyword>
<keyword id="KW-0055">Arginine biosynthesis</keyword>
<keyword id="KW-0067">ATP-binding</keyword>
<keyword id="KW-0963">Cytoplasm</keyword>
<keyword id="KW-0436">Ligase</keyword>
<keyword id="KW-0547">Nucleotide-binding</keyword>
<keyword id="KW-1185">Reference proteome</keyword>